<keyword id="KW-0143">Chaperone</keyword>
<protein>
    <recommendedName>
        <fullName evidence="1">Co-chaperone protein HscB homolog</fullName>
    </recommendedName>
</protein>
<name>HSCB_SHESA</name>
<evidence type="ECO:0000255" key="1">
    <source>
        <dbReference type="HAMAP-Rule" id="MF_00682"/>
    </source>
</evidence>
<accession>A0KXI7</accession>
<gene>
    <name evidence="1" type="primary">hscB</name>
    <name type="ordered locus">Shewana3_2277</name>
</gene>
<reference key="1">
    <citation type="submission" date="2006-09" db="EMBL/GenBank/DDBJ databases">
        <title>Complete sequence of chromosome 1 of Shewanella sp. ANA-3.</title>
        <authorList>
            <person name="Copeland A."/>
            <person name="Lucas S."/>
            <person name="Lapidus A."/>
            <person name="Barry K."/>
            <person name="Detter J.C."/>
            <person name="Glavina del Rio T."/>
            <person name="Hammon N."/>
            <person name="Israni S."/>
            <person name="Dalin E."/>
            <person name="Tice H."/>
            <person name="Pitluck S."/>
            <person name="Chertkov O."/>
            <person name="Brettin T."/>
            <person name="Bruce D."/>
            <person name="Han C."/>
            <person name="Tapia R."/>
            <person name="Gilna P."/>
            <person name="Schmutz J."/>
            <person name="Larimer F."/>
            <person name="Land M."/>
            <person name="Hauser L."/>
            <person name="Kyrpides N."/>
            <person name="Kim E."/>
            <person name="Newman D."/>
            <person name="Salticov C."/>
            <person name="Konstantinidis K."/>
            <person name="Klappenback J."/>
            <person name="Tiedje J."/>
            <person name="Richardson P."/>
        </authorList>
    </citation>
    <scope>NUCLEOTIDE SEQUENCE [LARGE SCALE GENOMIC DNA]</scope>
    <source>
        <strain>ANA-3</strain>
    </source>
</reference>
<dbReference type="EMBL" id="CP000469">
    <property type="protein sequence ID" value="ABK48506.1"/>
    <property type="molecule type" value="Genomic_DNA"/>
</dbReference>
<dbReference type="RefSeq" id="WP_011717220.1">
    <property type="nucleotide sequence ID" value="NC_008577.1"/>
</dbReference>
<dbReference type="SMR" id="A0KXI7"/>
<dbReference type="STRING" id="94122.Shewana3_2277"/>
<dbReference type="KEGG" id="shn:Shewana3_2277"/>
<dbReference type="eggNOG" id="COG1076">
    <property type="taxonomic scope" value="Bacteria"/>
</dbReference>
<dbReference type="HOGENOM" id="CLU_068529_2_0_6"/>
<dbReference type="OrthoDB" id="287587at2"/>
<dbReference type="Proteomes" id="UP000002589">
    <property type="component" value="Chromosome"/>
</dbReference>
<dbReference type="GO" id="GO:1990230">
    <property type="term" value="C:iron-sulfur cluster transfer complex"/>
    <property type="evidence" value="ECO:0007669"/>
    <property type="project" value="TreeGrafter"/>
</dbReference>
<dbReference type="GO" id="GO:0001671">
    <property type="term" value="F:ATPase activator activity"/>
    <property type="evidence" value="ECO:0007669"/>
    <property type="project" value="InterPro"/>
</dbReference>
<dbReference type="GO" id="GO:0051087">
    <property type="term" value="F:protein-folding chaperone binding"/>
    <property type="evidence" value="ECO:0007669"/>
    <property type="project" value="InterPro"/>
</dbReference>
<dbReference type="GO" id="GO:0044571">
    <property type="term" value="P:[2Fe-2S] cluster assembly"/>
    <property type="evidence" value="ECO:0007669"/>
    <property type="project" value="InterPro"/>
</dbReference>
<dbReference type="GO" id="GO:0051259">
    <property type="term" value="P:protein complex oligomerization"/>
    <property type="evidence" value="ECO:0007669"/>
    <property type="project" value="InterPro"/>
</dbReference>
<dbReference type="GO" id="GO:0006457">
    <property type="term" value="P:protein folding"/>
    <property type="evidence" value="ECO:0007669"/>
    <property type="project" value="UniProtKB-UniRule"/>
</dbReference>
<dbReference type="CDD" id="cd06257">
    <property type="entry name" value="DnaJ"/>
    <property type="match status" value="1"/>
</dbReference>
<dbReference type="FunFam" id="1.10.287.110:FF:000008">
    <property type="entry name" value="Co-chaperone protein HscB"/>
    <property type="match status" value="1"/>
</dbReference>
<dbReference type="Gene3D" id="1.10.287.110">
    <property type="entry name" value="DnaJ domain"/>
    <property type="match status" value="1"/>
</dbReference>
<dbReference type="Gene3D" id="1.20.1280.20">
    <property type="entry name" value="HscB, C-terminal domain"/>
    <property type="match status" value="1"/>
</dbReference>
<dbReference type="HAMAP" id="MF_00682">
    <property type="entry name" value="HscB"/>
    <property type="match status" value="1"/>
</dbReference>
<dbReference type="InterPro" id="IPR001623">
    <property type="entry name" value="DnaJ_domain"/>
</dbReference>
<dbReference type="InterPro" id="IPR004640">
    <property type="entry name" value="HscB"/>
</dbReference>
<dbReference type="InterPro" id="IPR036386">
    <property type="entry name" value="HscB_C_sf"/>
</dbReference>
<dbReference type="InterPro" id="IPR009073">
    <property type="entry name" value="HscB_oligo_C"/>
</dbReference>
<dbReference type="InterPro" id="IPR036869">
    <property type="entry name" value="J_dom_sf"/>
</dbReference>
<dbReference type="NCBIfam" id="TIGR00714">
    <property type="entry name" value="hscB"/>
    <property type="match status" value="1"/>
</dbReference>
<dbReference type="NCBIfam" id="NF003449">
    <property type="entry name" value="PRK05014.1"/>
    <property type="match status" value="1"/>
</dbReference>
<dbReference type="PANTHER" id="PTHR14021">
    <property type="entry name" value="IRON-SULFUR CLUSTER CO-CHAPERONE PROTEIN HSCB"/>
    <property type="match status" value="1"/>
</dbReference>
<dbReference type="PANTHER" id="PTHR14021:SF15">
    <property type="entry name" value="IRON-SULFUR CLUSTER CO-CHAPERONE PROTEIN HSCB"/>
    <property type="match status" value="1"/>
</dbReference>
<dbReference type="Pfam" id="PF07743">
    <property type="entry name" value="HSCB_C"/>
    <property type="match status" value="1"/>
</dbReference>
<dbReference type="SMART" id="SM00271">
    <property type="entry name" value="DnaJ"/>
    <property type="match status" value="1"/>
</dbReference>
<dbReference type="SUPFAM" id="SSF46565">
    <property type="entry name" value="Chaperone J-domain"/>
    <property type="match status" value="1"/>
</dbReference>
<dbReference type="SUPFAM" id="SSF47144">
    <property type="entry name" value="HSC20 (HSCB), C-terminal oligomerisation domain"/>
    <property type="match status" value="1"/>
</dbReference>
<dbReference type="PROSITE" id="PS50076">
    <property type="entry name" value="DNAJ_2"/>
    <property type="match status" value="1"/>
</dbReference>
<feature type="chain" id="PRO_1000083043" description="Co-chaperone protein HscB homolog">
    <location>
        <begin position="1"/>
        <end position="174"/>
    </location>
</feature>
<feature type="domain" description="J" evidence="1">
    <location>
        <begin position="2"/>
        <end position="74"/>
    </location>
</feature>
<comment type="function">
    <text evidence="1">Co-chaperone involved in the maturation of iron-sulfur cluster-containing proteins. Seems to help targeting proteins to be folded toward HscA.</text>
</comment>
<comment type="subunit">
    <text evidence="1">Interacts with HscA and stimulates its ATPase activity.</text>
</comment>
<comment type="similarity">
    <text evidence="1">Belongs to the HscB family.</text>
</comment>
<sequence>MNYFELFKFSPAFDIDTAVLAERYRELQRAVHPDKFANDTEQQRLLSVQRTAQVNDGYQTLKDPIRRAEHMLSLRGIDLSHETTTVKDTAFLMQQMEWREALEDIRDSADPQESIDELYDSFAAYRTKLTKLLTAQLSSGSEDDALLAADQVRKLKFMAKLHDELTRIEDALLD</sequence>
<proteinExistence type="inferred from homology"/>
<organism>
    <name type="scientific">Shewanella sp. (strain ANA-3)</name>
    <dbReference type="NCBI Taxonomy" id="94122"/>
    <lineage>
        <taxon>Bacteria</taxon>
        <taxon>Pseudomonadati</taxon>
        <taxon>Pseudomonadota</taxon>
        <taxon>Gammaproteobacteria</taxon>
        <taxon>Alteromonadales</taxon>
        <taxon>Shewanellaceae</taxon>
        <taxon>Shewanella</taxon>
    </lineage>
</organism>